<evidence type="ECO:0000250" key="1">
    <source>
        <dbReference type="UniProtKB" id="P84926"/>
    </source>
</evidence>
<evidence type="ECO:0000255" key="2"/>
<evidence type="ECO:0000269" key="3">
    <source>
    </source>
</evidence>
<evidence type="ECO:0000303" key="4">
    <source>
    </source>
</evidence>
<evidence type="ECO:0000305" key="5"/>
<proteinExistence type="evidence at protein level"/>
<accession>P86636</accession>
<comment type="function">
    <text evidence="1">Has antimicrobial activity.</text>
</comment>
<comment type="subcellular location">
    <subcellularLocation>
        <location evidence="3">Secreted</location>
    </subcellularLocation>
</comment>
<comment type="tissue specificity">
    <text evidence="3">Expressed by the skin glands.</text>
</comment>
<comment type="mass spectrometry"/>
<comment type="similarity">
    <text evidence="2">Belongs to the frog skin active peptide (FSAP) family. Dermaseptin subfamily.</text>
</comment>
<feature type="peptide" id="PRO_0000404611" description="Dermaseptin-J2" evidence="3">
    <location>
        <begin position="1"/>
        <end position="26"/>
    </location>
</feature>
<feature type="modified residue" description="Valine amide" evidence="3">
    <location>
        <position position="26"/>
    </location>
</feature>
<feature type="unsure residue" description="L or I" evidence="3">
    <location>
        <position position="2"/>
    </location>
</feature>
<feature type="unsure residue" description="K or Q" evidence="3">
    <location>
        <position position="4"/>
    </location>
</feature>
<feature type="unsure residue" description="L or I" evidence="3">
    <location>
        <position position="7"/>
    </location>
</feature>
<feature type="unsure residue" description="I or L" evidence="3">
    <location>
        <position position="10"/>
    </location>
</feature>
<feature type="unsure residue" description="K or Q" evidence="3">
    <location>
        <position position="12"/>
    </location>
</feature>
<feature type="unsure residue" description="L or I" evidence="3">
    <location>
        <position position="13"/>
    </location>
</feature>
<feature type="unsure residue" description="L or I" evidence="3">
    <location>
        <position position="19"/>
    </location>
</feature>
<feature type="unsure residue" description="K or Q" evidence="3">
    <location>
        <position position="23"/>
    </location>
</feature>
<feature type="unsure residue" description="L or I" evidence="3">
    <location>
        <position position="25"/>
    </location>
</feature>
<name>DMS2_PHAJA</name>
<organism>
    <name type="scientific">Phasmahyla jandaia</name>
    <name type="common">Jandaia leaf frog</name>
    <name type="synonym">Phyllomedusa jandaia</name>
    <dbReference type="NCBI Taxonomy" id="762504"/>
    <lineage>
        <taxon>Eukaryota</taxon>
        <taxon>Metazoa</taxon>
        <taxon>Chordata</taxon>
        <taxon>Craniata</taxon>
        <taxon>Vertebrata</taxon>
        <taxon>Euteleostomi</taxon>
        <taxon>Amphibia</taxon>
        <taxon>Batrachia</taxon>
        <taxon>Anura</taxon>
        <taxon>Neobatrachia</taxon>
        <taxon>Hyloidea</taxon>
        <taxon>Hylidae</taxon>
        <taxon>Phyllomedusinae</taxon>
        <taxon>Phasmahyla</taxon>
    </lineage>
</organism>
<dbReference type="GO" id="GO:0005576">
    <property type="term" value="C:extracellular region"/>
    <property type="evidence" value="ECO:0007669"/>
    <property type="project" value="UniProtKB-SubCell"/>
</dbReference>
<dbReference type="GO" id="GO:0042742">
    <property type="term" value="P:defense response to bacterium"/>
    <property type="evidence" value="ECO:0007669"/>
    <property type="project" value="UniProtKB-KW"/>
</dbReference>
<dbReference type="InterPro" id="IPR022731">
    <property type="entry name" value="Dermaseptin_dom"/>
</dbReference>
<dbReference type="Pfam" id="PF12121">
    <property type="entry name" value="DD_K"/>
    <property type="match status" value="1"/>
</dbReference>
<protein>
    <recommendedName>
        <fullName evidence="4">Dermaseptin-J2</fullName>
        <shortName evidence="4">DRS-J2</shortName>
    </recommendedName>
</protein>
<keyword id="KW-0027">Amidation</keyword>
<keyword id="KW-0878">Amphibian defense peptide</keyword>
<keyword id="KW-0044">Antibiotic</keyword>
<keyword id="KW-0929">Antimicrobial</keyword>
<keyword id="KW-0903">Direct protein sequencing</keyword>
<keyword id="KW-0964">Secreted</keyword>
<sequence>GLWKNMLSGIGKLAGEAALGAVKTLV</sequence>
<reference evidence="5" key="1">
    <citation type="journal article" date="2011" name="Toxicon">
        <title>Peptidomic dissection of the skin secretion of Phasmahyla jandaia (Bokermann and Sazima, 1978) (Anura, Hylidae, Phyllomedusinae).</title>
        <authorList>
            <person name="Rates B."/>
            <person name="Silva L.P."/>
            <person name="Ireno I.C."/>
            <person name="Leite F.S."/>
            <person name="Borges M.H."/>
            <person name="Bloch C. Jr."/>
            <person name="De Lima M.E."/>
            <person name="Pimenta A.M."/>
        </authorList>
    </citation>
    <scope>PROTEIN SEQUENCE</scope>
    <scope>SUBCELLULAR LOCATION</scope>
    <scope>TISSUE SPECIFICITY</scope>
    <scope>MASS SPECTROMETRY</scope>
    <scope>AMIDATION AT VAL-26</scope>
    <source>
        <tissue evidence="3">Skin secretion</tissue>
    </source>
</reference>